<comment type="function">
    <text evidence="1">Catalyzes the phosphorylation of N-acetylmannosamine (ManNAc) to ManNAc-6-P.</text>
</comment>
<comment type="catalytic activity">
    <reaction evidence="1">
        <text>an N-acyl-D-mannosamine + ATP = an N-acyl-D-mannosamine 6-phosphate + ADP + H(+)</text>
        <dbReference type="Rhea" id="RHEA:23832"/>
        <dbReference type="ChEBI" id="CHEBI:15378"/>
        <dbReference type="ChEBI" id="CHEBI:16062"/>
        <dbReference type="ChEBI" id="CHEBI:30616"/>
        <dbReference type="ChEBI" id="CHEBI:57666"/>
        <dbReference type="ChEBI" id="CHEBI:456216"/>
        <dbReference type="EC" id="2.7.1.60"/>
    </reaction>
</comment>
<comment type="pathway">
    <text evidence="1">Amino-sugar metabolism; N-acetylneuraminate degradation; D-fructose 6-phosphate from N-acetylneuraminate: step 2/5.</text>
</comment>
<comment type="subunit">
    <text evidence="1">Homodimer.</text>
</comment>
<comment type="similarity">
    <text evidence="1">Belongs to the ROK (NagC/XylR) family. NanK subfamily.</text>
</comment>
<gene>
    <name evidence="1" type="primary">nanK</name>
    <name type="ordered locus">SARI_04288</name>
</gene>
<keyword id="KW-0067">ATP-binding</keyword>
<keyword id="KW-0119">Carbohydrate metabolism</keyword>
<keyword id="KW-0418">Kinase</keyword>
<keyword id="KW-0479">Metal-binding</keyword>
<keyword id="KW-0547">Nucleotide-binding</keyword>
<keyword id="KW-1185">Reference proteome</keyword>
<keyword id="KW-0808">Transferase</keyword>
<keyword id="KW-0862">Zinc</keyword>
<evidence type="ECO:0000255" key="1">
    <source>
        <dbReference type="HAMAP-Rule" id="MF_01234"/>
    </source>
</evidence>
<proteinExistence type="inferred from homology"/>
<dbReference type="EC" id="2.7.1.60" evidence="1"/>
<dbReference type="EMBL" id="CP000880">
    <property type="protein sequence ID" value="ABX24071.1"/>
    <property type="molecule type" value="Genomic_DNA"/>
</dbReference>
<dbReference type="SMR" id="A9MNY9"/>
<dbReference type="STRING" id="41514.SARI_04288"/>
<dbReference type="KEGG" id="ses:SARI_04288"/>
<dbReference type="HOGENOM" id="CLU_036604_0_4_6"/>
<dbReference type="UniPathway" id="UPA00629">
    <property type="reaction ID" value="UER00681"/>
</dbReference>
<dbReference type="Proteomes" id="UP000002084">
    <property type="component" value="Chromosome"/>
</dbReference>
<dbReference type="GO" id="GO:0005524">
    <property type="term" value="F:ATP binding"/>
    <property type="evidence" value="ECO:0007669"/>
    <property type="project" value="UniProtKB-UniRule"/>
</dbReference>
<dbReference type="GO" id="GO:0009384">
    <property type="term" value="F:N-acylmannosamine kinase activity"/>
    <property type="evidence" value="ECO:0007669"/>
    <property type="project" value="UniProtKB-UniRule"/>
</dbReference>
<dbReference type="GO" id="GO:0008270">
    <property type="term" value="F:zinc ion binding"/>
    <property type="evidence" value="ECO:0007669"/>
    <property type="project" value="UniProtKB-UniRule"/>
</dbReference>
<dbReference type="GO" id="GO:0019262">
    <property type="term" value="P:N-acetylneuraminate catabolic process"/>
    <property type="evidence" value="ECO:0007669"/>
    <property type="project" value="UniProtKB-UniRule"/>
</dbReference>
<dbReference type="FunFam" id="3.30.420.40:FF:000062">
    <property type="entry name" value="N-acetylmannosamine kinase"/>
    <property type="match status" value="1"/>
</dbReference>
<dbReference type="FunFam" id="3.30.420.40:FF:000063">
    <property type="entry name" value="N-acetylmannosamine kinase"/>
    <property type="match status" value="1"/>
</dbReference>
<dbReference type="Gene3D" id="3.30.420.40">
    <property type="match status" value="2"/>
</dbReference>
<dbReference type="HAMAP" id="MF_01234">
    <property type="entry name" value="ManNAc_kinase"/>
    <property type="match status" value="1"/>
</dbReference>
<dbReference type="InterPro" id="IPR043129">
    <property type="entry name" value="ATPase_NBD"/>
</dbReference>
<dbReference type="InterPro" id="IPR023945">
    <property type="entry name" value="ManNAc_kinase_bac"/>
</dbReference>
<dbReference type="InterPro" id="IPR000600">
    <property type="entry name" value="ROK"/>
</dbReference>
<dbReference type="InterPro" id="IPR049874">
    <property type="entry name" value="ROK_cs"/>
</dbReference>
<dbReference type="NCBIfam" id="NF047821">
    <property type="entry name" value="NactlManKinNanK"/>
    <property type="match status" value="1"/>
</dbReference>
<dbReference type="NCBIfam" id="NF003461">
    <property type="entry name" value="PRK05082.1"/>
    <property type="match status" value="1"/>
</dbReference>
<dbReference type="PANTHER" id="PTHR18964:SF169">
    <property type="entry name" value="N-ACETYLMANNOSAMINE KINASE"/>
    <property type="match status" value="1"/>
</dbReference>
<dbReference type="PANTHER" id="PTHR18964">
    <property type="entry name" value="ROK (REPRESSOR, ORF, KINASE) FAMILY"/>
    <property type="match status" value="1"/>
</dbReference>
<dbReference type="Pfam" id="PF00480">
    <property type="entry name" value="ROK"/>
    <property type="match status" value="1"/>
</dbReference>
<dbReference type="SUPFAM" id="SSF53067">
    <property type="entry name" value="Actin-like ATPase domain"/>
    <property type="match status" value="1"/>
</dbReference>
<dbReference type="PROSITE" id="PS01125">
    <property type="entry name" value="ROK"/>
    <property type="match status" value="1"/>
</dbReference>
<organism>
    <name type="scientific">Salmonella arizonae (strain ATCC BAA-731 / CDC346-86 / RSK2980)</name>
    <dbReference type="NCBI Taxonomy" id="41514"/>
    <lineage>
        <taxon>Bacteria</taxon>
        <taxon>Pseudomonadati</taxon>
        <taxon>Pseudomonadota</taxon>
        <taxon>Gammaproteobacteria</taxon>
        <taxon>Enterobacterales</taxon>
        <taxon>Enterobacteriaceae</taxon>
        <taxon>Salmonella</taxon>
    </lineage>
</organism>
<feature type="chain" id="PRO_1000085725" description="N-acetylmannosamine kinase">
    <location>
        <begin position="1"/>
        <end position="291"/>
    </location>
</feature>
<feature type="binding site" evidence="1">
    <location>
        <begin position="5"/>
        <end position="12"/>
    </location>
    <ligand>
        <name>ATP</name>
        <dbReference type="ChEBI" id="CHEBI:30616"/>
    </ligand>
</feature>
<feature type="binding site" evidence="1">
    <location>
        <begin position="132"/>
        <end position="139"/>
    </location>
    <ligand>
        <name>ATP</name>
        <dbReference type="ChEBI" id="CHEBI:30616"/>
    </ligand>
</feature>
<feature type="binding site" evidence="1">
    <location>
        <position position="156"/>
    </location>
    <ligand>
        <name>Zn(2+)</name>
        <dbReference type="ChEBI" id="CHEBI:29105"/>
    </ligand>
</feature>
<feature type="binding site" evidence="1">
    <location>
        <position position="166"/>
    </location>
    <ligand>
        <name>Zn(2+)</name>
        <dbReference type="ChEBI" id="CHEBI:29105"/>
    </ligand>
</feature>
<feature type="binding site" evidence="1">
    <location>
        <position position="168"/>
    </location>
    <ligand>
        <name>Zn(2+)</name>
        <dbReference type="ChEBI" id="CHEBI:29105"/>
    </ligand>
</feature>
<feature type="binding site" evidence="1">
    <location>
        <position position="173"/>
    </location>
    <ligand>
        <name>Zn(2+)</name>
        <dbReference type="ChEBI" id="CHEBI:29105"/>
    </ligand>
</feature>
<reference key="1">
    <citation type="submission" date="2007-11" db="EMBL/GenBank/DDBJ databases">
        <authorList>
            <consortium name="The Salmonella enterica serovar Arizonae Genome Sequencing Project"/>
            <person name="McClelland M."/>
            <person name="Sanderson E.K."/>
            <person name="Porwollik S."/>
            <person name="Spieth J."/>
            <person name="Clifton W.S."/>
            <person name="Fulton R."/>
            <person name="Chunyan W."/>
            <person name="Wollam A."/>
            <person name="Shah N."/>
            <person name="Pepin K."/>
            <person name="Bhonagiri V."/>
            <person name="Nash W."/>
            <person name="Johnson M."/>
            <person name="Thiruvilangam P."/>
            <person name="Wilson R."/>
        </authorList>
    </citation>
    <scope>NUCLEOTIDE SEQUENCE [LARGE SCALE GENOMIC DNA]</scope>
    <source>
        <strain>ATCC BAA-731 / CDC346-86 / RSK2980</strain>
    </source>
</reference>
<accession>A9MNY9</accession>
<sequence>MTTLAIDIGGTKLAAALIDKNLRISQRRELPTPGSKTPGALREALTALVEPLRTEAHQVAIASTGIIQEGMLLALNPHNLGGLLHFPLVQTLETITGLPTLAVNDAQAAAWAEYHALPDDIRDMVFITVSTGVGGGVVCDGKLLTGKGGLAGHLGHTLADPHGPVCGCGRVGCVEAIASGRGMAAAARDDLAGCDAKTLFIRAGEGHQQARQLVRQSAQVVARLVADVKVTTDCQCVVIGGSVGLAEGYLEQVRAFLMQEPAPYHVALSAARYRHDAGLLGAALLAQGDTL</sequence>
<name>NANK_SALAR</name>
<protein>
    <recommendedName>
        <fullName evidence="1">N-acetylmannosamine kinase</fullName>
        <ecNumber evidence="1">2.7.1.60</ecNumber>
    </recommendedName>
    <alternativeName>
        <fullName evidence="1">ManNAc kinase</fullName>
    </alternativeName>
    <alternativeName>
        <fullName evidence="1">N-acetyl-D-mannosamine kinase</fullName>
    </alternativeName>
</protein>